<reference key="1">
    <citation type="journal article" date="1993" name="J. Biol. Chem.">
        <title>Sequence and structural implications of a bovine corneal keratan sulfate proteoglycan core protein. Protein 37B represents bovine lumican and proteins 37A and 25 are unique.</title>
        <authorList>
            <person name="Funderburgh J.L."/>
            <person name="Funderburgh M.L."/>
            <person name="Brown S.J."/>
            <person name="Vergnes J.-P."/>
            <person name="Hassell J.R."/>
            <person name="Mann M.M."/>
            <person name="Conrad G.W."/>
        </authorList>
    </citation>
    <scope>NUCLEOTIDE SEQUENCE [MRNA]</scope>
    <scope>PROTEIN SEQUENCE OF 272-295</scope>
    <source>
        <tissue>Cornea</tissue>
    </source>
</reference>
<reference key="2">
    <citation type="submission" date="2005-08" db="EMBL/GenBank/DDBJ databases">
        <authorList>
            <consortium name="NIH - Mammalian Gene Collection (MGC) project"/>
        </authorList>
    </citation>
    <scope>NUCLEOTIDE SEQUENCE [LARGE SCALE MRNA]</scope>
    <source>
        <strain>Crossbred X Angus</strain>
        <tissue>Ileum</tissue>
    </source>
</reference>
<reference key="3">
    <citation type="journal article" date="1990" name="J. Biol. Chem.">
        <title>Isoforms of corneal keratan sulfate proteoglycan.</title>
        <authorList>
            <person name="Funderburgh J.L."/>
            <person name="Conrad G.W."/>
        </authorList>
    </citation>
    <scope>PROTEIN SEQUENCE OF 19-42</scope>
    <scope>GLYCOSYLATION</scope>
</reference>
<reference key="4">
    <citation type="journal article" date="2004" name="J. Biol. Chem.">
        <title>Identification of tyrosine sulfation in extracellular leucine-rich repeat proteins using mass spectrometry.</title>
        <authorList>
            <person name="Onnerfjord P."/>
            <person name="Heathfield T.F."/>
            <person name="Heinegaard D."/>
        </authorList>
    </citation>
    <scope>SULFATION</scope>
    <scope>IDENTIFICATION BY MASS SPECTROMETRY</scope>
</reference>
<organism>
    <name type="scientific">Bos taurus</name>
    <name type="common">Bovine</name>
    <dbReference type="NCBI Taxonomy" id="9913"/>
    <lineage>
        <taxon>Eukaryota</taxon>
        <taxon>Metazoa</taxon>
        <taxon>Chordata</taxon>
        <taxon>Craniata</taxon>
        <taxon>Vertebrata</taxon>
        <taxon>Euteleostomi</taxon>
        <taxon>Mammalia</taxon>
        <taxon>Eutheria</taxon>
        <taxon>Laurasiatheria</taxon>
        <taxon>Artiodactyla</taxon>
        <taxon>Ruminantia</taxon>
        <taxon>Pecora</taxon>
        <taxon>Bovidae</taxon>
        <taxon>Bovinae</taxon>
        <taxon>Bos</taxon>
    </lineage>
</organism>
<name>LUM_BOVIN</name>
<accession>Q05443</accession>
<accession>Q3T0T2</accession>
<sequence>MNLGVFPLLLALIGGASSTYPDYYEYYDFPQALYGRSSPNCAPECNCPESYPSAMYCDELKLKSVPMVPPGIKYLYLRNNQIDHIDDKAFENVTDLQWLILDHNLLENSKIKGKVFSKLKQLKKLHINYNNLTESVGPLPKSLVDLQLTNNKISKLGSFDGLVNLTFIHLQHNQLKEDAVSAALKGLKSLEYLDLSFNQMTKLPSGLPVSLLTLYLDNNKISNIPDEYFKRFSALQYLRLSHNELADSGVPGNSFNVSSLLELDLSYNKLKSIPTVNENLENYYLEVNELEKFDVKSFCKILGPLSYSKIKHLRLDGNHITQTSLPPDMYECLRVANEITVN</sequence>
<feature type="signal peptide" evidence="6">
    <location>
        <begin position="1"/>
        <end position="18"/>
    </location>
</feature>
<feature type="chain" id="PRO_0000032732" description="Lumican">
    <location>
        <begin position="19"/>
        <end position="342"/>
    </location>
</feature>
<feature type="domain" description="LRRNT">
    <location>
        <begin position="32"/>
        <end position="70"/>
    </location>
</feature>
<feature type="repeat" description="LRR 1">
    <location>
        <begin position="71"/>
        <end position="92"/>
    </location>
</feature>
<feature type="repeat" description="LRR 2">
    <location>
        <begin position="95"/>
        <end position="118"/>
    </location>
</feature>
<feature type="repeat" description="LRR 3">
    <location>
        <begin position="121"/>
        <end position="141"/>
    </location>
</feature>
<feature type="repeat" description="LRR 4">
    <location>
        <begin position="142"/>
        <end position="163"/>
    </location>
</feature>
<feature type="repeat" description="LRR 5">
    <location>
        <begin position="164"/>
        <end position="185"/>
    </location>
</feature>
<feature type="repeat" description="LRR 6">
    <location>
        <begin position="189"/>
        <end position="209"/>
    </location>
</feature>
<feature type="repeat" description="LRR 7">
    <location>
        <begin position="210"/>
        <end position="231"/>
    </location>
</feature>
<feature type="repeat" description="LRR 8">
    <location>
        <begin position="234"/>
        <end position="254"/>
    </location>
</feature>
<feature type="repeat" description="LRR 9">
    <location>
        <begin position="259"/>
        <end position="280"/>
    </location>
</feature>
<feature type="repeat" description="LRR 10">
    <location>
        <begin position="281"/>
        <end position="300"/>
    </location>
</feature>
<feature type="repeat" description="LRR 11">
    <location>
        <begin position="309"/>
        <end position="330"/>
    </location>
</feature>
<feature type="modified residue" description="Sulfotyrosine" evidence="2">
    <location>
        <position position="20"/>
    </location>
</feature>
<feature type="modified residue" description="Sulfotyrosine" evidence="2">
    <location>
        <position position="23"/>
    </location>
</feature>
<feature type="modified residue" description="Sulfotyrosine" evidence="2">
    <location>
        <position position="34"/>
    </location>
</feature>
<feature type="modified residue" description="Phosphoserine" evidence="3">
    <location>
        <position position="308"/>
    </location>
</feature>
<feature type="glycosylation site" description="N-linked (GlcNAc...) (keratan sulfate) asparagine" evidence="4">
    <location>
        <position position="92"/>
    </location>
</feature>
<feature type="glycosylation site" description="N-linked (GlcNAc...) (keratan sulfate) asparagine" evidence="4">
    <location>
        <position position="131"/>
    </location>
</feature>
<feature type="glycosylation site" description="N-linked (GlcNAc...) (keratan sulfate) asparagine" evidence="4">
    <location>
        <position position="164"/>
    </location>
</feature>
<feature type="glycosylation site" description="N-linked (GlcNAc...) (keratan sulfate) asparagine" evidence="4">
    <location>
        <position position="256"/>
    </location>
</feature>
<feature type="disulfide bond" evidence="1">
    <location>
        <begin position="299"/>
        <end position="332"/>
    </location>
</feature>
<dbReference type="EMBL" id="L11063">
    <property type="protein sequence ID" value="AAA30608.1"/>
    <property type="molecule type" value="mRNA"/>
</dbReference>
<dbReference type="EMBL" id="BC102271">
    <property type="protein sequence ID" value="AAI02272.1"/>
    <property type="molecule type" value="mRNA"/>
</dbReference>
<dbReference type="PIR" id="A46743">
    <property type="entry name" value="A46743"/>
</dbReference>
<dbReference type="RefSeq" id="NP_776359.1">
    <property type="nucleotide sequence ID" value="NM_173934.1"/>
</dbReference>
<dbReference type="RefSeq" id="XP_005206099.1">
    <property type="nucleotide sequence ID" value="XM_005206042.2"/>
</dbReference>
<dbReference type="RefSeq" id="XP_059742070.1">
    <property type="nucleotide sequence ID" value="XM_059886087.1"/>
</dbReference>
<dbReference type="SMR" id="Q05443"/>
<dbReference type="FunCoup" id="Q05443">
    <property type="interactions" value="391"/>
</dbReference>
<dbReference type="STRING" id="9913.ENSBTAP00000002279"/>
<dbReference type="GlyCosmos" id="Q05443">
    <property type="glycosylation" value="4 sites, No reported glycans"/>
</dbReference>
<dbReference type="GlyGen" id="Q05443">
    <property type="glycosylation" value="4 sites"/>
</dbReference>
<dbReference type="PaxDb" id="9913-ENSBTAP00000002279"/>
<dbReference type="PeptideAtlas" id="Q05443"/>
<dbReference type="Ensembl" id="ENSBTAT00000002279.5">
    <property type="protein sequence ID" value="ENSBTAP00000002279.3"/>
    <property type="gene ID" value="ENSBTAG00000001745.5"/>
</dbReference>
<dbReference type="GeneID" id="280847"/>
<dbReference type="KEGG" id="bta:280847"/>
<dbReference type="CTD" id="4060"/>
<dbReference type="VEuPathDB" id="HostDB:ENSBTAG00000001745"/>
<dbReference type="VGNC" id="VGNC:31081">
    <property type="gene designation" value="LUM"/>
</dbReference>
<dbReference type="eggNOG" id="KOG0619">
    <property type="taxonomic scope" value="Eukaryota"/>
</dbReference>
<dbReference type="GeneTree" id="ENSGT00940000158177"/>
<dbReference type="HOGENOM" id="CLU_000288_186_4_1"/>
<dbReference type="InParanoid" id="Q05443"/>
<dbReference type="OMA" id="DCPINFP"/>
<dbReference type="OrthoDB" id="6359842at2759"/>
<dbReference type="TreeFam" id="TF334562"/>
<dbReference type="Reactome" id="R-BTA-2022854">
    <property type="pathway name" value="Keratan sulfate biosynthesis"/>
</dbReference>
<dbReference type="Reactome" id="R-BTA-2022857">
    <property type="pathway name" value="Keratan sulfate degradation"/>
</dbReference>
<dbReference type="Reactome" id="R-BTA-216083">
    <property type="pathway name" value="Integrin cell surface interactions"/>
</dbReference>
<dbReference type="Proteomes" id="UP000009136">
    <property type="component" value="Chromosome 5"/>
</dbReference>
<dbReference type="Bgee" id="ENSBTAG00000001745">
    <property type="expression patterns" value="Expressed in pigment epithelium of eye and 102 other cell types or tissues"/>
</dbReference>
<dbReference type="GO" id="GO:0031012">
    <property type="term" value="C:extracellular matrix"/>
    <property type="evidence" value="ECO:0000250"/>
    <property type="project" value="AgBase"/>
</dbReference>
<dbReference type="GO" id="GO:0005615">
    <property type="term" value="C:extracellular space"/>
    <property type="evidence" value="ECO:0000318"/>
    <property type="project" value="GO_Central"/>
</dbReference>
<dbReference type="GO" id="GO:0005518">
    <property type="term" value="F:collagen binding"/>
    <property type="evidence" value="ECO:0000318"/>
    <property type="project" value="GO_Central"/>
</dbReference>
<dbReference type="FunFam" id="3.80.10.10:FF:000063">
    <property type="entry name" value="Lumican"/>
    <property type="match status" value="1"/>
</dbReference>
<dbReference type="FunFam" id="3.80.10.10:FF:000073">
    <property type="entry name" value="Lumican"/>
    <property type="match status" value="1"/>
</dbReference>
<dbReference type="FunFam" id="3.80.10.10:FF:000151">
    <property type="entry name" value="Lumican"/>
    <property type="match status" value="1"/>
</dbReference>
<dbReference type="Gene3D" id="3.80.10.10">
    <property type="entry name" value="Ribonuclease Inhibitor"/>
    <property type="match status" value="3"/>
</dbReference>
<dbReference type="InterPro" id="IPR001611">
    <property type="entry name" value="Leu-rich_rpt"/>
</dbReference>
<dbReference type="InterPro" id="IPR025875">
    <property type="entry name" value="Leu-rich_rpt_4"/>
</dbReference>
<dbReference type="InterPro" id="IPR003591">
    <property type="entry name" value="Leu-rich_rpt_typical-subtyp"/>
</dbReference>
<dbReference type="InterPro" id="IPR032675">
    <property type="entry name" value="LRR_dom_sf"/>
</dbReference>
<dbReference type="InterPro" id="IPR000372">
    <property type="entry name" value="LRRNT"/>
</dbReference>
<dbReference type="InterPro" id="IPR050333">
    <property type="entry name" value="SLRP"/>
</dbReference>
<dbReference type="PANTHER" id="PTHR45712">
    <property type="entry name" value="AGAP008170-PA"/>
    <property type="match status" value="1"/>
</dbReference>
<dbReference type="PANTHER" id="PTHR45712:SF6">
    <property type="entry name" value="LUMICAN"/>
    <property type="match status" value="1"/>
</dbReference>
<dbReference type="Pfam" id="PF12799">
    <property type="entry name" value="LRR_4"/>
    <property type="match status" value="1"/>
</dbReference>
<dbReference type="Pfam" id="PF13855">
    <property type="entry name" value="LRR_8"/>
    <property type="match status" value="2"/>
</dbReference>
<dbReference type="Pfam" id="PF01462">
    <property type="entry name" value="LRRNT"/>
    <property type="match status" value="1"/>
</dbReference>
<dbReference type="PRINTS" id="PR00019">
    <property type="entry name" value="LEURICHRPT"/>
</dbReference>
<dbReference type="SMART" id="SM00364">
    <property type="entry name" value="LRR_BAC"/>
    <property type="match status" value="4"/>
</dbReference>
<dbReference type="SMART" id="SM00365">
    <property type="entry name" value="LRR_SD22"/>
    <property type="match status" value="4"/>
</dbReference>
<dbReference type="SMART" id="SM00369">
    <property type="entry name" value="LRR_TYP"/>
    <property type="match status" value="9"/>
</dbReference>
<dbReference type="SMART" id="SM00013">
    <property type="entry name" value="LRRNT"/>
    <property type="match status" value="1"/>
</dbReference>
<dbReference type="SUPFAM" id="SSF52058">
    <property type="entry name" value="L domain-like"/>
    <property type="match status" value="1"/>
</dbReference>
<dbReference type="PROSITE" id="PS51450">
    <property type="entry name" value="LRR"/>
    <property type="match status" value="10"/>
</dbReference>
<evidence type="ECO:0000250" key="1"/>
<evidence type="ECO:0000250" key="2">
    <source>
        <dbReference type="UniProtKB" id="P51885"/>
    </source>
</evidence>
<evidence type="ECO:0000250" key="3">
    <source>
        <dbReference type="UniProtKB" id="P51886"/>
    </source>
</evidence>
<evidence type="ECO:0000255" key="4"/>
<evidence type="ECO:0000269" key="5">
    <source>
    </source>
</evidence>
<evidence type="ECO:0000269" key="6">
    <source>
    </source>
</evidence>
<evidence type="ECO:0000305" key="7"/>
<protein>
    <recommendedName>
        <fullName>Lumican</fullName>
    </recommendedName>
    <alternativeName>
        <fullName>Corneal keratan sulfate proteoglycan 37B core protein</fullName>
    </alternativeName>
    <alternativeName>
        <fullName>Keratan sulfate proteoglycan</fullName>
        <shortName>KSPG</shortName>
    </alternativeName>
</protein>
<proteinExistence type="evidence at protein level"/>
<comment type="subunit">
    <text>Binds to laminin.</text>
</comment>
<comment type="subcellular location">
    <subcellularLocation>
        <location evidence="1">Secreted</location>
        <location evidence="1">Extracellular space</location>
        <location evidence="1">Extracellular matrix</location>
    </subcellularLocation>
</comment>
<comment type="tissue specificity">
    <text>Cornea and other tissues.</text>
</comment>
<comment type="PTM">
    <text evidence="5">Sulfated on tyrosine residue(s).</text>
</comment>
<comment type="PTM">
    <text evidence="6">Contains keratan sulfate.</text>
</comment>
<comment type="similarity">
    <text evidence="7">Belongs to the small leucine-rich proteoglycan (SLRP) family. SLRP class II subfamily.</text>
</comment>
<gene>
    <name type="primary">LUM</name>
    <name type="synonym">LDC</name>
</gene>
<keyword id="KW-0903">Direct protein sequencing</keyword>
<keyword id="KW-1015">Disulfide bond</keyword>
<keyword id="KW-0272">Extracellular matrix</keyword>
<keyword id="KW-0325">Glycoprotein</keyword>
<keyword id="KW-0433">Leucine-rich repeat</keyword>
<keyword id="KW-0597">Phosphoprotein</keyword>
<keyword id="KW-0654">Proteoglycan</keyword>
<keyword id="KW-1185">Reference proteome</keyword>
<keyword id="KW-0677">Repeat</keyword>
<keyword id="KW-0964">Secreted</keyword>
<keyword id="KW-0732">Signal</keyword>
<keyword id="KW-0765">Sulfation</keyword>